<gene>
    <name evidence="38" type="primary">IRAK1</name>
    <name type="synonym">IRAK</name>
</gene>
<comment type="function">
    <text evidence="7 11 14 15 16 17 22 26">Serine/threonine-protein kinase that plays a critical role in initiating innate immune response against foreign pathogens. Involved in Toll-like receptor (TLR) and IL-1R signaling pathways. Is rapidly recruited by MYD88 to the receptor-signaling complex upon TLR activation. Association with MYD88 leads to IRAK1 phosphorylation by IRAK4 and subsequent autophosphorylation and kinase activation. Phosphorylates E3 ubiquitin ligases Pellino proteins (PELI1, PELI2 and PELI3) to promote pellino-mediated polyubiquitination of IRAK1. Then, the ubiquitin-binding domain of IKBKG/NEMO binds to polyubiquitinated IRAK1 bringing together the IRAK1-MAP3K7/TAK1-TRAF6 complex and the NEMO-IKKA-IKKB complex. In turn, MAP3K7/TAK1 activates IKKs (CHUK/IKKA and IKBKB/IKKB) leading to NF-kappa-B nuclear translocation and activation. Alternatively, phosphorylates TIRAP to promote its ubiquitination and subsequent degradation. Phosphorylates the interferon regulatory factor 7 (IRF7) to induce its activation and translocation to the nucleus, resulting in transcriptional activation of type I IFN genes, which drive the cell in an antiviral state. When sumoylated, translocates to the nucleus and phosphorylates STAT3.</text>
</comment>
<comment type="catalytic activity">
    <reaction>
        <text>L-seryl-[protein] + ATP = O-phospho-L-seryl-[protein] + ADP + H(+)</text>
        <dbReference type="Rhea" id="RHEA:17989"/>
        <dbReference type="Rhea" id="RHEA-COMP:9863"/>
        <dbReference type="Rhea" id="RHEA-COMP:11604"/>
        <dbReference type="ChEBI" id="CHEBI:15378"/>
        <dbReference type="ChEBI" id="CHEBI:29999"/>
        <dbReference type="ChEBI" id="CHEBI:30616"/>
        <dbReference type="ChEBI" id="CHEBI:83421"/>
        <dbReference type="ChEBI" id="CHEBI:456216"/>
        <dbReference type="EC" id="2.7.11.1"/>
    </reaction>
</comment>
<comment type="catalytic activity">
    <reaction>
        <text>L-threonyl-[protein] + ATP = O-phospho-L-threonyl-[protein] + ADP + H(+)</text>
        <dbReference type="Rhea" id="RHEA:46608"/>
        <dbReference type="Rhea" id="RHEA-COMP:11060"/>
        <dbReference type="Rhea" id="RHEA-COMP:11605"/>
        <dbReference type="ChEBI" id="CHEBI:15378"/>
        <dbReference type="ChEBI" id="CHEBI:30013"/>
        <dbReference type="ChEBI" id="CHEBI:30616"/>
        <dbReference type="ChEBI" id="CHEBI:61977"/>
        <dbReference type="ChEBI" id="CHEBI:456216"/>
        <dbReference type="EC" id="2.7.11.1"/>
    </reaction>
</comment>
<comment type="cofactor">
    <cofactor>
        <name>Mg(2+)</name>
        <dbReference type="ChEBI" id="CHEBI:18420"/>
    </cofactor>
</comment>
<comment type="subunit">
    <text evidence="2 6 8 9 12 18 20 23 24 27 29 32">Homodimer (By similarity). Forms a complex with TRAF6, PELI1, IRAK4 and MYD88 (PubMed:16951688). Direct binding of SMAD6 to PELI1 prevents complex formation and hence negatively regulates IL1R-TLR signaling and eventually NF-kappa-B-mediated gene expression (PubMed:16951688). The TRAF6-PELI1-IRAK4-MYD88 complex recruits MAP3K7/TAK1, TAB1 and TAB2 to mediate NF-kappa-B activation (PubMed:16951688). Interaction with MYD88 recruits IRAK1 to the stimulated receptor complex (PubMed:9430229). Interacts with TOLLIP; this interaction occurs in the cytosol prior to receptor activation (PubMed:10854325). Interacts with IL1RL1 (PubMed:16286016). Interacts with PELI1 and TRAF6 (PubMed:12496252). Interacts (when polyubiquitinated) with IKBKG/NEMO (PubMed:18347055). Interacts with RSAD2/viperin (By similarity). Interacts with IRAK1BP1 (By similarity). Interacts with PELI2 (By similarity). Interacts with ZC3H12A; this interaction increases the interaction between ZC3H12A and IKBKB/IKKB (By similarity). Interacts with IRAK4 (PubMed:11960013). Interacts with PELI3 (PubMed:12874243). Interacts with INAVA; the interaction takes place upon PRR stimulation (PubMed:28436939). Interacts (via C-terminus) with NFATC4 (via N-terminus) (PubMed:18691762).</text>
</comment>
<comment type="subunit">
    <text evidence="28">(Microbial infection) Interacts with mumps virus protein SH; this interaction inhibits downstream NF-kappa-B pathway activation.</text>
</comment>
<comment type="subunit">
    <text evidence="30">(Microbial infection) Interacts with alphaviruses SINV, CHIKV, RRV, VEEV and EEEV capsid proteins; the interactions lead to inhibition of IRAK1-dependent signaling.</text>
</comment>
<comment type="interaction">
    <interactant intactId="EBI-358664">
        <id>P51617</id>
    </interactant>
    <interactant intactId="EBI-751345">
        <id>Q15306</id>
        <label>IRF4</label>
    </interactant>
    <organismsDiffer>false</organismsDiffer>
    <experiments>2</experiments>
</comment>
<comment type="interaction">
    <interactant intactId="EBI-358664">
        <id>P51617</id>
    </interactant>
    <interactant intactId="EBI-968267">
        <id>Q92985</id>
        <label>IRF7</label>
    </interactant>
    <organismsDiffer>false</organismsDiffer>
    <experiments>2</experiments>
</comment>
<comment type="interaction">
    <interactant intactId="EBI-358664">
        <id>P51617</id>
    </interactant>
    <interactant intactId="EBI-447677">
        <id>Q99836</id>
        <label>MYD88</label>
    </interactant>
    <organismsDiffer>false</organismsDiffer>
    <experiments>3</experiments>
</comment>
<comment type="interaction">
    <interactant intactId="EBI-358664">
        <id>P51617</id>
    </interactant>
    <interactant intactId="EBI-448369">
        <id>Q96FA3</id>
        <label>PELI1</label>
    </interactant>
    <organismsDiffer>false</organismsDiffer>
    <experiments>4</experiments>
</comment>
<comment type="interaction">
    <interactant intactId="EBI-358664">
        <id>P51617</id>
    </interactant>
    <interactant intactId="EBI-448407">
        <id>Q9HAT8</id>
        <label>PELI2</label>
    </interactant>
    <organismsDiffer>false</organismsDiffer>
    <experiments>4</experiments>
</comment>
<comment type="interaction">
    <interactant intactId="EBI-358664">
        <id>P51617</id>
    </interactant>
    <interactant intactId="EBI-448472">
        <id>Q8N2H9-2</id>
        <label>PELI3</label>
    </interactant>
    <organismsDiffer>false</organismsDiffer>
    <experiments>2</experiments>
</comment>
<comment type="interaction">
    <interactant intactId="EBI-358664">
        <id>P51617</id>
    </interactant>
    <interactant intactId="EBI-714158">
        <id>Q13526</id>
        <label>PIN1</label>
    </interactant>
    <organismsDiffer>false</organismsDiffer>
    <experiments>10</experiments>
</comment>
<comment type="interaction">
    <interactant intactId="EBI-358664">
        <id>P51617</id>
    </interactant>
    <interactant intactId="EBI-2800345">
        <id>Q86WV6</id>
        <label>STING1</label>
    </interactant>
    <organismsDiffer>false</organismsDiffer>
    <experiments>2</experiments>
</comment>
<comment type="interaction">
    <interactant intactId="EBI-358664">
        <id>P51617</id>
    </interactant>
    <interactant intactId="EBI-528644">
        <id>P58753</id>
        <label>TIRAP</label>
    </interactant>
    <organismsDiffer>false</organismsDiffer>
    <experiments>3</experiments>
</comment>
<comment type="interaction">
    <interactant intactId="EBI-358664">
        <id>P51617</id>
    </interactant>
    <interactant intactId="EBI-359276">
        <id>Q9Y4K3</id>
        <label>TRAF6</label>
    </interactant>
    <organismsDiffer>false</organismsDiffer>
    <experiments>3</experiments>
</comment>
<comment type="interaction">
    <interactant intactId="EBI-358664">
        <id>P51617</id>
    </interactant>
    <interactant intactId="EBI-6116986">
        <id>Q8VCW4</id>
        <label>Unc93b1</label>
    </interactant>
    <organismsDiffer>true</organismsDiffer>
    <experiments>2</experiments>
</comment>
<comment type="interaction">
    <interactant intactId="EBI-358664">
        <id>P51617</id>
    </interactant>
    <interactant intactId="EBI-5326026">
        <id>Q5D1E7</id>
        <label>Zc3h12a</label>
    </interactant>
    <organismsDiffer>true</organismsDiffer>
    <experiments>3</experiments>
</comment>
<comment type="subcellular location">
    <subcellularLocation>
        <location evidence="19">Cytoplasm</location>
    </subcellularLocation>
    <subcellularLocation>
        <location evidence="19">Nucleus</location>
    </subcellularLocation>
    <subcellularLocation>
        <location evidence="1">Lipid droplet</location>
    </subcellularLocation>
    <text evidence="1">Translocates to the nucleus when sumoylated. RSAD2/viperin recruits it to the lipid droplet (By similarity).</text>
</comment>
<comment type="alternative products">
    <event type="alternative splicing"/>
    <isoform>
        <id>P51617-1</id>
        <name>1</name>
        <name>a</name>
        <sequence type="displayed"/>
    </isoform>
    <isoform>
        <id>P51617-2</id>
        <name>2</name>
        <name>b</name>
        <sequence type="described" ref="VSP_011851"/>
    </isoform>
    <isoform>
        <id>P51617-3</id>
        <name>3</name>
        <sequence type="described" ref="VSP_011849 VSP_011850 VSP_011851"/>
    </isoform>
    <isoform>
        <id>P51617-4</id>
        <name>4</name>
        <sequence type="described" ref="VSP_041950"/>
    </isoform>
</comment>
<comment type="tissue specificity">
    <text evidence="7">Isoform 1 and isoform 2 are ubiquitously expressed in all tissues examined, with isoform 1 being more strongly expressed than isoform 2.</text>
</comment>
<comment type="domain">
    <text evidence="13">The ProST region is composed of many proline and serine residues (more than 20 of each) and some threonines. This region is the site of IRAK-1 hyperphosphorylation.</text>
</comment>
<comment type="PTM">
    <text evidence="7 10 13 14">Following recruitment on the activated receptor complex, phosphorylated on Thr-209, probably by IRAK4, resulting in a conformational change of the kinase domain, allowing further phosphorylations to take place. Thr-387 phosphorylation in the activation loop is required to achieve full enzymatic activity.</text>
</comment>
<comment type="PTM">
    <text evidence="19 23 25">Polyubiquitinated by TRAF6 after cell stimulation with IL-1-beta by PELI1, PELI2 and PELI3. Polyubiquitination occurs with polyubiquitin chains linked through 'Lys-63'. Ubiquitination promotes interaction with NEMO/IKBKG. Also sumoylated; leading to nuclear translocation.</text>
</comment>
<comment type="miscellaneous">
    <molecule>Isoform 2</molecule>
    <text evidence="36">Inactive.</text>
</comment>
<comment type="similarity">
    <text evidence="36">Belongs to the protein kinase superfamily. TKL Ser/Thr protein kinase family. Pelle subfamily.</text>
</comment>
<name>IRAK1_HUMAN</name>
<dbReference type="EC" id="2.7.11.1"/>
<dbReference type="EMBL" id="L76191">
    <property type="protein sequence ID" value="AAC41949.1"/>
    <property type="molecule type" value="mRNA"/>
</dbReference>
<dbReference type="EMBL" id="AF030876">
    <property type="protein sequence ID" value="AAC08756.1"/>
    <property type="molecule type" value="Genomic_DNA"/>
</dbReference>
<dbReference type="EMBL" id="AF346607">
    <property type="protein sequence ID" value="AAK62888.1"/>
    <property type="molecule type" value="mRNA"/>
</dbReference>
<dbReference type="EMBL" id="DQ054788">
    <property type="protein sequence ID" value="AAY88246.1"/>
    <property type="molecule type" value="mRNA"/>
</dbReference>
<dbReference type="EMBL" id="U52112">
    <property type="status" value="NOT_ANNOTATED_CDS"/>
    <property type="molecule type" value="Genomic_DNA"/>
</dbReference>
<dbReference type="EMBL" id="CH471172">
    <property type="protein sequence ID" value="EAW72762.1"/>
    <property type="molecule type" value="Genomic_DNA"/>
</dbReference>
<dbReference type="EMBL" id="CH471172">
    <property type="protein sequence ID" value="EAW72763.1"/>
    <property type="molecule type" value="Genomic_DNA"/>
</dbReference>
<dbReference type="EMBL" id="CH471172">
    <property type="protein sequence ID" value="EAW72764.1"/>
    <property type="molecule type" value="Genomic_DNA"/>
</dbReference>
<dbReference type="EMBL" id="CH471172">
    <property type="protein sequence ID" value="EAW72765.1"/>
    <property type="molecule type" value="Genomic_DNA"/>
</dbReference>
<dbReference type="EMBL" id="BC054000">
    <property type="protein sequence ID" value="AAH54000.1"/>
    <property type="molecule type" value="mRNA"/>
</dbReference>
<dbReference type="EMBL" id="BC014963">
    <property type="protein sequence ID" value="AAH14963.1"/>
    <property type="molecule type" value="mRNA"/>
</dbReference>
<dbReference type="CCDS" id="CCDS14740.1">
    <molecule id="P51617-1"/>
</dbReference>
<dbReference type="CCDS" id="CCDS35443.1">
    <molecule id="P51617-4"/>
</dbReference>
<dbReference type="CCDS" id="CCDS35444.1">
    <molecule id="P51617-2"/>
</dbReference>
<dbReference type="PIR" id="G02512">
    <property type="entry name" value="G02512"/>
</dbReference>
<dbReference type="RefSeq" id="NP_001020413.1">
    <molecule id="P51617-2"/>
    <property type="nucleotide sequence ID" value="NM_001025242.2"/>
</dbReference>
<dbReference type="RefSeq" id="NP_001020414.1">
    <molecule id="P51617-4"/>
    <property type="nucleotide sequence ID" value="NM_001025243.2"/>
</dbReference>
<dbReference type="RefSeq" id="NP_001560.2">
    <molecule id="P51617-1"/>
    <property type="nucleotide sequence ID" value="NM_001569.4"/>
</dbReference>
<dbReference type="PDB" id="6BFN">
    <property type="method" value="X-ray"/>
    <property type="resolution" value="2.26 A"/>
    <property type="chains" value="A/B=194-530"/>
</dbReference>
<dbReference type="PDBsum" id="6BFN"/>
<dbReference type="SMR" id="P51617"/>
<dbReference type="BioGRID" id="109863">
    <property type="interactions" value="363"/>
</dbReference>
<dbReference type="ComplexPortal" id="CPX-10281">
    <property type="entry name" value="Myddosome core complex"/>
</dbReference>
<dbReference type="CORUM" id="P51617"/>
<dbReference type="DIP" id="DIP-397N"/>
<dbReference type="ELM" id="P51617"/>
<dbReference type="FunCoup" id="P51617">
    <property type="interactions" value="1800"/>
</dbReference>
<dbReference type="IntAct" id="P51617">
    <property type="interactions" value="218"/>
</dbReference>
<dbReference type="MINT" id="P51617"/>
<dbReference type="STRING" id="9606.ENSP00000358997"/>
<dbReference type="BindingDB" id="P51617"/>
<dbReference type="ChEMBL" id="CHEMBL3357"/>
<dbReference type="DrugBank" id="DB12010">
    <property type="generic name" value="Fostamatinib"/>
</dbReference>
<dbReference type="DrugCentral" id="P51617"/>
<dbReference type="GuidetoPHARMACOLOGY" id="2042"/>
<dbReference type="GlyGen" id="P51617">
    <property type="glycosylation" value="1 site, 1 O-linked glycan (1 site)"/>
</dbReference>
<dbReference type="iPTMnet" id="P51617"/>
<dbReference type="PhosphoSitePlus" id="P51617"/>
<dbReference type="BioMuta" id="IRAK1"/>
<dbReference type="DMDM" id="8928535"/>
<dbReference type="CPTAC" id="CPTAC-2897"/>
<dbReference type="CPTAC" id="CPTAC-2898"/>
<dbReference type="jPOST" id="P51617"/>
<dbReference type="MassIVE" id="P51617"/>
<dbReference type="PaxDb" id="9606-ENSP00000358997"/>
<dbReference type="PeptideAtlas" id="P51617"/>
<dbReference type="ProteomicsDB" id="56349">
    <molecule id="P51617-1"/>
</dbReference>
<dbReference type="ProteomicsDB" id="56350">
    <molecule id="P51617-2"/>
</dbReference>
<dbReference type="ProteomicsDB" id="56351">
    <molecule id="P51617-3"/>
</dbReference>
<dbReference type="ProteomicsDB" id="56352">
    <molecule id="P51617-4"/>
</dbReference>
<dbReference type="Pumba" id="P51617"/>
<dbReference type="Antibodypedia" id="3845">
    <property type="antibodies" value="1013 antibodies from 47 providers"/>
</dbReference>
<dbReference type="DNASU" id="3654"/>
<dbReference type="Ensembl" id="ENST00000369974.6">
    <molecule id="P51617-4"/>
    <property type="protein sequence ID" value="ENSP00000358991.2"/>
    <property type="gene ID" value="ENSG00000184216.15"/>
</dbReference>
<dbReference type="Ensembl" id="ENST00000369980.8">
    <molecule id="P51617-1"/>
    <property type="protein sequence ID" value="ENSP00000358997.3"/>
    <property type="gene ID" value="ENSG00000184216.15"/>
</dbReference>
<dbReference type="Ensembl" id="ENST00000393687.6">
    <molecule id="P51617-2"/>
    <property type="protein sequence ID" value="ENSP00000377291.2"/>
    <property type="gene ID" value="ENSG00000184216.15"/>
</dbReference>
<dbReference type="GeneID" id="3654"/>
<dbReference type="KEGG" id="hsa:3654"/>
<dbReference type="MANE-Select" id="ENST00000369980.8">
    <property type="protein sequence ID" value="ENSP00000358997.3"/>
    <property type="RefSeq nucleotide sequence ID" value="NM_001569.4"/>
    <property type="RefSeq protein sequence ID" value="NP_001560.2"/>
</dbReference>
<dbReference type="UCSC" id="uc004fjr.2">
    <molecule id="P51617-1"/>
    <property type="organism name" value="human"/>
</dbReference>
<dbReference type="AGR" id="HGNC:6112"/>
<dbReference type="CTD" id="3654"/>
<dbReference type="DisGeNET" id="3654"/>
<dbReference type="GeneCards" id="IRAK1"/>
<dbReference type="HGNC" id="HGNC:6112">
    <property type="gene designation" value="IRAK1"/>
</dbReference>
<dbReference type="HPA" id="ENSG00000184216">
    <property type="expression patterns" value="Low tissue specificity"/>
</dbReference>
<dbReference type="MalaCards" id="IRAK1"/>
<dbReference type="MIM" id="300283">
    <property type="type" value="gene"/>
</dbReference>
<dbReference type="neXtProt" id="NX_P51617"/>
<dbReference type="OpenTargets" id="ENSG00000184216"/>
<dbReference type="Orphanet" id="93552">
    <property type="disease" value="Pediatric systemic lupus erythematosus"/>
</dbReference>
<dbReference type="Orphanet" id="536">
    <property type="disease" value="Systemic lupus erythematosus"/>
</dbReference>
<dbReference type="PharmGKB" id="PA29912"/>
<dbReference type="VEuPathDB" id="HostDB:ENSG00000184216"/>
<dbReference type="eggNOG" id="KOG1187">
    <property type="taxonomic scope" value="Eukaryota"/>
</dbReference>
<dbReference type="GeneTree" id="ENSGT00940000160502"/>
<dbReference type="HOGENOM" id="CLU_000288_173_1_1"/>
<dbReference type="InParanoid" id="P51617"/>
<dbReference type="OMA" id="MTQVYES"/>
<dbReference type="OrthoDB" id="4062651at2759"/>
<dbReference type="PAN-GO" id="P51617">
    <property type="GO annotations" value="13 GO annotations based on evolutionary models"/>
</dbReference>
<dbReference type="PhylomeDB" id="P51617"/>
<dbReference type="TreeFam" id="TF328924"/>
<dbReference type="BRENDA" id="2.7.10.2">
    <property type="organism ID" value="2681"/>
</dbReference>
<dbReference type="PathwayCommons" id="P51617"/>
<dbReference type="Reactome" id="R-HSA-1257604">
    <property type="pathway name" value="PIP3 activates AKT signaling"/>
</dbReference>
<dbReference type="Reactome" id="R-HSA-166058">
    <property type="pathway name" value="MyD88:MAL(TIRAP) cascade initiated on plasma membrane"/>
</dbReference>
<dbReference type="Reactome" id="R-HSA-168638">
    <property type="pathway name" value="NOD1/2 Signaling Pathway"/>
</dbReference>
<dbReference type="Reactome" id="R-HSA-209543">
    <property type="pathway name" value="p75NTR recruits signalling complexes"/>
</dbReference>
<dbReference type="Reactome" id="R-HSA-209560">
    <property type="pathway name" value="NF-kB is activated and signals survival"/>
</dbReference>
<dbReference type="Reactome" id="R-HSA-445989">
    <property type="pathway name" value="TAK1-dependent IKK and NF-kappa-B activation"/>
</dbReference>
<dbReference type="Reactome" id="R-HSA-450302">
    <property type="pathway name" value="activated TAK1 mediates p38 MAPK activation"/>
</dbReference>
<dbReference type="Reactome" id="R-HSA-450321">
    <property type="pathway name" value="JNK (c-Jun kinases) phosphorylation and activation mediated by activated human TAK1"/>
</dbReference>
<dbReference type="Reactome" id="R-HSA-6811558">
    <property type="pathway name" value="PI5P, PP2A and IER3 Regulate PI3K/AKT Signaling"/>
</dbReference>
<dbReference type="Reactome" id="R-HSA-8986944">
    <property type="pathway name" value="Transcriptional Regulation by MECP2"/>
</dbReference>
<dbReference type="Reactome" id="R-HSA-9020702">
    <property type="pathway name" value="Interleukin-1 signaling"/>
</dbReference>
<dbReference type="Reactome" id="R-HSA-937039">
    <property type="pathway name" value="IRAK1 recruits IKK complex"/>
</dbReference>
<dbReference type="Reactome" id="R-HSA-9705671">
    <property type="pathway name" value="SARS-CoV-2 activates/modulates innate and adaptive immune responses"/>
</dbReference>
<dbReference type="Reactome" id="R-HSA-975110">
    <property type="pathway name" value="TRAF6 mediated IRF7 activation in TLR7/8 or 9 signaling"/>
</dbReference>
<dbReference type="Reactome" id="R-HSA-975138">
    <property type="pathway name" value="TRAF6 mediated induction of NFkB and MAP kinases upon TLR7/8 or 9 activation"/>
</dbReference>
<dbReference type="Reactome" id="R-HSA-975144">
    <property type="pathway name" value="IRAK1 recruits IKK complex upon TLR7/8 or 9 stimulation"/>
</dbReference>
<dbReference type="Reactome" id="R-HSA-975155">
    <property type="pathway name" value="MyD88 dependent cascade initiated on endosome"/>
</dbReference>
<dbReference type="Reactome" id="R-HSA-975871">
    <property type="pathway name" value="MyD88 cascade initiated on plasma membrane"/>
</dbReference>
<dbReference type="SignaLink" id="P51617"/>
<dbReference type="SIGNOR" id="P51617"/>
<dbReference type="BioGRID-ORCS" id="3654">
    <property type="hits" value="20 hits in 816 CRISPR screens"/>
</dbReference>
<dbReference type="ChiTaRS" id="IRAK1">
    <property type="organism name" value="human"/>
</dbReference>
<dbReference type="GeneWiki" id="IRAK1"/>
<dbReference type="GenomeRNAi" id="3654"/>
<dbReference type="Pharos" id="P51617">
    <property type="development level" value="Tchem"/>
</dbReference>
<dbReference type="PRO" id="PR:P51617"/>
<dbReference type="Proteomes" id="UP000005640">
    <property type="component" value="Chromosome X"/>
</dbReference>
<dbReference type="RNAct" id="P51617">
    <property type="molecule type" value="protein"/>
</dbReference>
<dbReference type="Bgee" id="ENSG00000184216">
    <property type="expression patterns" value="Expressed in parotid gland and 203 other cell types or tissues"/>
</dbReference>
<dbReference type="ExpressionAtlas" id="P51617">
    <property type="expression patterns" value="baseline and differential"/>
</dbReference>
<dbReference type="GO" id="GO:0009986">
    <property type="term" value="C:cell surface"/>
    <property type="evidence" value="ECO:0000314"/>
    <property type="project" value="UniProt"/>
</dbReference>
<dbReference type="GO" id="GO:0005737">
    <property type="term" value="C:cytoplasm"/>
    <property type="evidence" value="ECO:0000318"/>
    <property type="project" value="GO_Central"/>
</dbReference>
<dbReference type="GO" id="GO:0005829">
    <property type="term" value="C:cytosol"/>
    <property type="evidence" value="ECO:0000314"/>
    <property type="project" value="HPA"/>
</dbReference>
<dbReference type="GO" id="GO:0010008">
    <property type="term" value="C:endosome membrane"/>
    <property type="evidence" value="ECO:0000304"/>
    <property type="project" value="Reactome"/>
</dbReference>
<dbReference type="GO" id="GO:0005811">
    <property type="term" value="C:lipid droplet"/>
    <property type="evidence" value="ECO:0000250"/>
    <property type="project" value="UniProtKB"/>
</dbReference>
<dbReference type="GO" id="GO:0005654">
    <property type="term" value="C:nucleoplasm"/>
    <property type="evidence" value="ECO:0000314"/>
    <property type="project" value="HPA"/>
</dbReference>
<dbReference type="GO" id="GO:0005634">
    <property type="term" value="C:nucleus"/>
    <property type="evidence" value="ECO:0000318"/>
    <property type="project" value="GO_Central"/>
</dbReference>
<dbReference type="GO" id="GO:0005886">
    <property type="term" value="C:plasma membrane"/>
    <property type="evidence" value="ECO:0000318"/>
    <property type="project" value="GO_Central"/>
</dbReference>
<dbReference type="GO" id="GO:0032991">
    <property type="term" value="C:protein-containing complex"/>
    <property type="evidence" value="ECO:0000314"/>
    <property type="project" value="UniProtKB"/>
</dbReference>
<dbReference type="GO" id="GO:0005524">
    <property type="term" value="F:ATP binding"/>
    <property type="evidence" value="ECO:0007669"/>
    <property type="project" value="UniProtKB-KW"/>
</dbReference>
<dbReference type="GO" id="GO:0031072">
    <property type="term" value="F:heat shock protein binding"/>
    <property type="evidence" value="ECO:0007669"/>
    <property type="project" value="Ensembl"/>
</dbReference>
<dbReference type="GO" id="GO:0042802">
    <property type="term" value="F:identical protein binding"/>
    <property type="evidence" value="ECO:0000353"/>
    <property type="project" value="UniProtKB"/>
</dbReference>
<dbReference type="GO" id="GO:0016301">
    <property type="term" value="F:kinase activity"/>
    <property type="evidence" value="ECO:0000314"/>
    <property type="project" value="MGI"/>
</dbReference>
<dbReference type="GO" id="GO:0046982">
    <property type="term" value="F:protein heterodimerization activity"/>
    <property type="evidence" value="ECO:0000353"/>
    <property type="project" value="BHF-UCL"/>
</dbReference>
<dbReference type="GO" id="GO:0042803">
    <property type="term" value="F:protein homodimerization activity"/>
    <property type="evidence" value="ECO:0000353"/>
    <property type="project" value="BHF-UCL"/>
</dbReference>
<dbReference type="GO" id="GO:0004672">
    <property type="term" value="F:protein kinase activity"/>
    <property type="evidence" value="ECO:0000314"/>
    <property type="project" value="MGI"/>
</dbReference>
<dbReference type="GO" id="GO:0019901">
    <property type="term" value="F:protein kinase binding"/>
    <property type="evidence" value="ECO:0000353"/>
    <property type="project" value="UniProtKB"/>
</dbReference>
<dbReference type="GO" id="GO:0106310">
    <property type="term" value="F:protein serine kinase activity"/>
    <property type="evidence" value="ECO:0007669"/>
    <property type="project" value="RHEA"/>
</dbReference>
<dbReference type="GO" id="GO:0004674">
    <property type="term" value="F:protein serine/threonine kinase activity"/>
    <property type="evidence" value="ECO:0000314"/>
    <property type="project" value="UniProtKB"/>
</dbReference>
<dbReference type="GO" id="GO:0007249">
    <property type="term" value="P:canonical NF-kappaB signal transduction"/>
    <property type="evidence" value="ECO:0000315"/>
    <property type="project" value="ARUK-UCL"/>
</dbReference>
<dbReference type="GO" id="GO:0034605">
    <property type="term" value="P:cellular response to heat"/>
    <property type="evidence" value="ECO:0007669"/>
    <property type="project" value="Ensembl"/>
</dbReference>
<dbReference type="GO" id="GO:0071456">
    <property type="term" value="P:cellular response to hypoxia"/>
    <property type="evidence" value="ECO:0007669"/>
    <property type="project" value="Ensembl"/>
</dbReference>
<dbReference type="GO" id="GO:0045087">
    <property type="term" value="P:innate immune response"/>
    <property type="evidence" value="ECO:0000318"/>
    <property type="project" value="GO_Central"/>
</dbReference>
<dbReference type="GO" id="GO:0070498">
    <property type="term" value="P:interleukin-1-mediated signaling pathway"/>
    <property type="evidence" value="ECO:0000314"/>
    <property type="project" value="UniProt"/>
</dbReference>
<dbReference type="GO" id="GO:0038172">
    <property type="term" value="P:interleukin-33-mediated signaling pathway"/>
    <property type="evidence" value="ECO:0000315"/>
    <property type="project" value="UniProt"/>
</dbReference>
<dbReference type="GO" id="GO:0035556">
    <property type="term" value="P:intracellular signal transduction"/>
    <property type="evidence" value="ECO:0000318"/>
    <property type="project" value="GO_Central"/>
</dbReference>
<dbReference type="GO" id="GO:0007254">
    <property type="term" value="P:JNK cascade"/>
    <property type="evidence" value="ECO:0007669"/>
    <property type="project" value="Ensembl"/>
</dbReference>
<dbReference type="GO" id="GO:0031663">
    <property type="term" value="P:lipopolysaccharide-mediated signaling pathway"/>
    <property type="evidence" value="ECO:0000315"/>
    <property type="project" value="BHF-UCL"/>
</dbReference>
<dbReference type="GO" id="GO:0002755">
    <property type="term" value="P:MyD88-dependent toll-like receptor signaling pathway"/>
    <property type="evidence" value="ECO:0000304"/>
    <property type="project" value="BHF-UCL"/>
</dbReference>
<dbReference type="GO" id="GO:0043124">
    <property type="term" value="P:negative regulation of canonical NF-kappaB signal transduction"/>
    <property type="evidence" value="ECO:0000315"/>
    <property type="project" value="BHF-UCL"/>
</dbReference>
<dbReference type="GO" id="GO:0043123">
    <property type="term" value="P:positive regulation of canonical NF-kappaB signal transduction"/>
    <property type="evidence" value="ECO:0000315"/>
    <property type="project" value="MGI"/>
</dbReference>
<dbReference type="GO" id="GO:1904996">
    <property type="term" value="P:positive regulation of leukocyte adhesion to vascular endothelial cell"/>
    <property type="evidence" value="ECO:0000315"/>
    <property type="project" value="ARUK-UCL"/>
</dbReference>
<dbReference type="GO" id="GO:0051092">
    <property type="term" value="P:positive regulation of NF-kappaB transcription factor activity"/>
    <property type="evidence" value="ECO:0000314"/>
    <property type="project" value="UniProtKB"/>
</dbReference>
<dbReference type="GO" id="GO:0048661">
    <property type="term" value="P:positive regulation of smooth muscle cell proliferation"/>
    <property type="evidence" value="ECO:0007669"/>
    <property type="project" value="Ensembl"/>
</dbReference>
<dbReference type="GO" id="GO:0032481">
    <property type="term" value="P:positive regulation of type I interferon production"/>
    <property type="evidence" value="ECO:0000315"/>
    <property type="project" value="BHF-UCL"/>
</dbReference>
<dbReference type="GO" id="GO:0046777">
    <property type="term" value="P:protein autophosphorylation"/>
    <property type="evidence" value="ECO:0000314"/>
    <property type="project" value="UniProtKB"/>
</dbReference>
<dbReference type="GO" id="GO:0001959">
    <property type="term" value="P:regulation of cytokine-mediated signaling pathway"/>
    <property type="evidence" value="ECO:0000315"/>
    <property type="project" value="BHF-UCL"/>
</dbReference>
<dbReference type="GO" id="GO:0070555">
    <property type="term" value="P:response to interleukin-1"/>
    <property type="evidence" value="ECO:0000315"/>
    <property type="project" value="BHF-UCL"/>
</dbReference>
<dbReference type="GO" id="GO:0032496">
    <property type="term" value="P:response to lipopolysaccharide"/>
    <property type="evidence" value="ECO:0000315"/>
    <property type="project" value="BHF-UCL"/>
</dbReference>
<dbReference type="GO" id="GO:0008063">
    <property type="term" value="P:Toll signaling pathway"/>
    <property type="evidence" value="ECO:0000318"/>
    <property type="project" value="GO_Central"/>
</dbReference>
<dbReference type="GO" id="GO:0034134">
    <property type="term" value="P:toll-like receptor 2 signaling pathway"/>
    <property type="evidence" value="ECO:0000315"/>
    <property type="project" value="BHF-UCL"/>
</dbReference>
<dbReference type="GO" id="GO:0034142">
    <property type="term" value="P:toll-like receptor 4 signaling pathway"/>
    <property type="evidence" value="ECO:0000318"/>
    <property type="project" value="GO_Central"/>
</dbReference>
<dbReference type="GO" id="GO:0034162">
    <property type="term" value="P:toll-like receptor 9 signaling pathway"/>
    <property type="evidence" value="ECO:0000304"/>
    <property type="project" value="Reactome"/>
</dbReference>
<dbReference type="GO" id="GO:0002224">
    <property type="term" value="P:toll-like receptor signaling pathway"/>
    <property type="evidence" value="ECO:0000304"/>
    <property type="project" value="Reactome"/>
</dbReference>
<dbReference type="GO" id="GO:0060337">
    <property type="term" value="P:type I interferon-mediated signaling pathway"/>
    <property type="evidence" value="ECO:0000315"/>
    <property type="project" value="BHF-UCL"/>
</dbReference>
<dbReference type="CDD" id="cd08794">
    <property type="entry name" value="Death_IRAK1"/>
    <property type="match status" value="1"/>
</dbReference>
<dbReference type="DisProt" id="DP02467"/>
<dbReference type="FunFam" id="1.10.533.10:FF:000027">
    <property type="entry name" value="Interleukin-1 receptor-associated kinase 1 (Predicted)"/>
    <property type="match status" value="1"/>
</dbReference>
<dbReference type="FunFam" id="3.30.200.20:FF:000300">
    <property type="entry name" value="Interleukin-1 receptor-associated kinase 1 (Predicted)"/>
    <property type="match status" value="1"/>
</dbReference>
<dbReference type="FunFam" id="1.10.510.10:FF:000424">
    <property type="entry name" value="Putative interleukin-1 receptor-associated kinase 1"/>
    <property type="match status" value="1"/>
</dbReference>
<dbReference type="Gene3D" id="1.10.533.10">
    <property type="entry name" value="Death Domain, Fas"/>
    <property type="match status" value="1"/>
</dbReference>
<dbReference type="Gene3D" id="3.30.200.20">
    <property type="entry name" value="Phosphorylase Kinase, domain 1"/>
    <property type="match status" value="1"/>
</dbReference>
<dbReference type="Gene3D" id="1.10.510.10">
    <property type="entry name" value="Transferase(Phosphotransferase) domain 1"/>
    <property type="match status" value="1"/>
</dbReference>
<dbReference type="InterPro" id="IPR011029">
    <property type="entry name" value="DEATH-like_dom_sf"/>
</dbReference>
<dbReference type="InterPro" id="IPR000488">
    <property type="entry name" value="Death_dom"/>
</dbReference>
<dbReference type="InterPro" id="IPR035533">
    <property type="entry name" value="Death_IRAK1"/>
</dbReference>
<dbReference type="InterPro" id="IPR011009">
    <property type="entry name" value="Kinase-like_dom_sf"/>
</dbReference>
<dbReference type="InterPro" id="IPR000719">
    <property type="entry name" value="Prot_kinase_dom"/>
</dbReference>
<dbReference type="InterPro" id="IPR017441">
    <property type="entry name" value="Protein_kinase_ATP_BS"/>
</dbReference>
<dbReference type="InterPro" id="IPR008271">
    <property type="entry name" value="Ser/Thr_kinase_AS"/>
</dbReference>
<dbReference type="PANTHER" id="PTHR27001:SF939">
    <property type="entry name" value="INTERLEUKIN 1 RECEPTOR ASSOCIATED KINASE 1"/>
    <property type="match status" value="1"/>
</dbReference>
<dbReference type="PANTHER" id="PTHR27001">
    <property type="entry name" value="OS01G0253100 PROTEIN"/>
    <property type="match status" value="1"/>
</dbReference>
<dbReference type="Pfam" id="PF00531">
    <property type="entry name" value="Death"/>
    <property type="match status" value="1"/>
</dbReference>
<dbReference type="Pfam" id="PF00069">
    <property type="entry name" value="Pkinase"/>
    <property type="match status" value="1"/>
</dbReference>
<dbReference type="SMART" id="SM00220">
    <property type="entry name" value="S_TKc"/>
    <property type="match status" value="1"/>
</dbReference>
<dbReference type="SUPFAM" id="SSF47986">
    <property type="entry name" value="DEATH domain"/>
    <property type="match status" value="1"/>
</dbReference>
<dbReference type="SUPFAM" id="SSF56112">
    <property type="entry name" value="Protein kinase-like (PK-like)"/>
    <property type="match status" value="1"/>
</dbReference>
<dbReference type="PROSITE" id="PS00107">
    <property type="entry name" value="PROTEIN_KINASE_ATP"/>
    <property type="match status" value="1"/>
</dbReference>
<dbReference type="PROSITE" id="PS50011">
    <property type="entry name" value="PROTEIN_KINASE_DOM"/>
    <property type="match status" value="1"/>
</dbReference>
<dbReference type="PROSITE" id="PS00108">
    <property type="entry name" value="PROTEIN_KINASE_ST"/>
    <property type="match status" value="1"/>
</dbReference>
<reference key="1">
    <citation type="journal article" date="1996" name="Science">
        <title>IRAK: a kinase associated with the interleukin-1 receptor.</title>
        <authorList>
            <person name="Cao Z."/>
            <person name="Henzel W.J."/>
            <person name="Gao X."/>
        </authorList>
    </citation>
    <scope>NUCLEOTIDE SEQUENCE [MRNA] (ISOFORM 1)</scope>
    <scope>PARTIAL PROTEIN SEQUENCE</scope>
    <scope>VARIANTS SER-196 AND LEU-532</scope>
</reference>
<reference key="2">
    <citation type="journal article" date="2000" name="Mamm. Genome">
        <title>Comparative sequence analysis of the MECP2-locus in human and mouse reveals new transcribed regions.</title>
        <authorList>
            <person name="Reichwald K."/>
            <person name="Thiesen J."/>
            <person name="Wiehe T."/>
            <person name="Weitzel J."/>
            <person name="Poustka W.A."/>
            <person name="Rosenthal A."/>
            <person name="Platzer M."/>
            <person name="Stratling W.H."/>
            <person name="Kioschis P."/>
        </authorList>
    </citation>
    <scope>NUCLEOTIDE SEQUENCE [GENOMIC DNA] (ISOFORM 1)</scope>
</reference>
<reference key="3">
    <citation type="journal article" date="2001" name="J. Biol. Chem.">
        <title>IRAK1b, a novel alternative splice variant of interleukin-1 receptor-associated kinase (IRAK), mediates interleukin-1 signaling and has prolonged stability.</title>
        <authorList>
            <person name="Jensen L.E."/>
            <person name="Whitehead A.S."/>
        </authorList>
    </citation>
    <scope>NUCLEOTIDE SEQUENCE [MRNA] (ISOFORM 2)</scope>
    <scope>FUNCTION</scope>
    <scope>TISSUE SPECIFICITY</scope>
    <scope>PHOSPHORYLATION</scope>
</reference>
<reference key="4">
    <citation type="journal article" date="2005" name="Mol. Cell. Biol.">
        <title>A novel splice variant of interleukin-1 receptor (IL-1R)-associated kinase 1 plays a negative regulatory role in Toll/IL-1R-induced inflammatory signaling.</title>
        <authorList>
            <person name="Rao N."/>
            <person name="Nguyen S."/>
            <person name="Ngo K."/>
            <person name="Fung-Leung W.P."/>
        </authorList>
    </citation>
    <scope>NUCLEOTIDE SEQUENCE [MRNA] (ISOFORM 4)</scope>
</reference>
<reference key="5">
    <citation type="journal article" date="2005" name="Nature">
        <title>The DNA sequence of the human X chromosome.</title>
        <authorList>
            <person name="Ross M.T."/>
            <person name="Grafham D.V."/>
            <person name="Coffey A.J."/>
            <person name="Scherer S."/>
            <person name="McLay K."/>
            <person name="Muzny D."/>
            <person name="Platzer M."/>
            <person name="Howell G.R."/>
            <person name="Burrows C."/>
            <person name="Bird C.P."/>
            <person name="Frankish A."/>
            <person name="Lovell F.L."/>
            <person name="Howe K.L."/>
            <person name="Ashurst J.L."/>
            <person name="Fulton R.S."/>
            <person name="Sudbrak R."/>
            <person name="Wen G."/>
            <person name="Jones M.C."/>
            <person name="Hurles M.E."/>
            <person name="Andrews T.D."/>
            <person name="Scott C.E."/>
            <person name="Searle S."/>
            <person name="Ramser J."/>
            <person name="Whittaker A."/>
            <person name="Deadman R."/>
            <person name="Carter N.P."/>
            <person name="Hunt S.E."/>
            <person name="Chen R."/>
            <person name="Cree A."/>
            <person name="Gunaratne P."/>
            <person name="Havlak P."/>
            <person name="Hodgson A."/>
            <person name="Metzker M.L."/>
            <person name="Richards S."/>
            <person name="Scott G."/>
            <person name="Steffen D."/>
            <person name="Sodergren E."/>
            <person name="Wheeler D.A."/>
            <person name="Worley K.C."/>
            <person name="Ainscough R."/>
            <person name="Ambrose K.D."/>
            <person name="Ansari-Lari M.A."/>
            <person name="Aradhya S."/>
            <person name="Ashwell R.I."/>
            <person name="Babbage A.K."/>
            <person name="Bagguley C.L."/>
            <person name="Ballabio A."/>
            <person name="Banerjee R."/>
            <person name="Barker G.E."/>
            <person name="Barlow K.F."/>
            <person name="Barrett I.P."/>
            <person name="Bates K.N."/>
            <person name="Beare D.M."/>
            <person name="Beasley H."/>
            <person name="Beasley O."/>
            <person name="Beck A."/>
            <person name="Bethel G."/>
            <person name="Blechschmidt K."/>
            <person name="Brady N."/>
            <person name="Bray-Allen S."/>
            <person name="Bridgeman A.M."/>
            <person name="Brown A.J."/>
            <person name="Brown M.J."/>
            <person name="Bonnin D."/>
            <person name="Bruford E.A."/>
            <person name="Buhay C."/>
            <person name="Burch P."/>
            <person name="Burford D."/>
            <person name="Burgess J."/>
            <person name="Burrill W."/>
            <person name="Burton J."/>
            <person name="Bye J.M."/>
            <person name="Carder C."/>
            <person name="Carrel L."/>
            <person name="Chako J."/>
            <person name="Chapman J.C."/>
            <person name="Chavez D."/>
            <person name="Chen E."/>
            <person name="Chen G."/>
            <person name="Chen Y."/>
            <person name="Chen Z."/>
            <person name="Chinault C."/>
            <person name="Ciccodicola A."/>
            <person name="Clark S.Y."/>
            <person name="Clarke G."/>
            <person name="Clee C.M."/>
            <person name="Clegg S."/>
            <person name="Clerc-Blankenburg K."/>
            <person name="Clifford K."/>
            <person name="Cobley V."/>
            <person name="Cole C.G."/>
            <person name="Conquer J.S."/>
            <person name="Corby N."/>
            <person name="Connor R.E."/>
            <person name="David R."/>
            <person name="Davies J."/>
            <person name="Davis C."/>
            <person name="Davis J."/>
            <person name="Delgado O."/>
            <person name="Deshazo D."/>
            <person name="Dhami P."/>
            <person name="Ding Y."/>
            <person name="Dinh H."/>
            <person name="Dodsworth S."/>
            <person name="Draper H."/>
            <person name="Dugan-Rocha S."/>
            <person name="Dunham A."/>
            <person name="Dunn M."/>
            <person name="Durbin K.J."/>
            <person name="Dutta I."/>
            <person name="Eades T."/>
            <person name="Ellwood M."/>
            <person name="Emery-Cohen A."/>
            <person name="Errington H."/>
            <person name="Evans K.L."/>
            <person name="Faulkner L."/>
            <person name="Francis F."/>
            <person name="Frankland J."/>
            <person name="Fraser A.E."/>
            <person name="Galgoczy P."/>
            <person name="Gilbert J."/>
            <person name="Gill R."/>
            <person name="Gloeckner G."/>
            <person name="Gregory S.G."/>
            <person name="Gribble S."/>
            <person name="Griffiths C."/>
            <person name="Grocock R."/>
            <person name="Gu Y."/>
            <person name="Gwilliam R."/>
            <person name="Hamilton C."/>
            <person name="Hart E.A."/>
            <person name="Hawes A."/>
            <person name="Heath P.D."/>
            <person name="Heitmann K."/>
            <person name="Hennig S."/>
            <person name="Hernandez J."/>
            <person name="Hinzmann B."/>
            <person name="Ho S."/>
            <person name="Hoffs M."/>
            <person name="Howden P.J."/>
            <person name="Huckle E.J."/>
            <person name="Hume J."/>
            <person name="Hunt P.J."/>
            <person name="Hunt A.R."/>
            <person name="Isherwood J."/>
            <person name="Jacob L."/>
            <person name="Johnson D."/>
            <person name="Jones S."/>
            <person name="de Jong P.J."/>
            <person name="Joseph S.S."/>
            <person name="Keenan S."/>
            <person name="Kelly S."/>
            <person name="Kershaw J.K."/>
            <person name="Khan Z."/>
            <person name="Kioschis P."/>
            <person name="Klages S."/>
            <person name="Knights A.J."/>
            <person name="Kosiura A."/>
            <person name="Kovar-Smith C."/>
            <person name="Laird G.K."/>
            <person name="Langford C."/>
            <person name="Lawlor S."/>
            <person name="Leversha M."/>
            <person name="Lewis L."/>
            <person name="Liu W."/>
            <person name="Lloyd C."/>
            <person name="Lloyd D.M."/>
            <person name="Loulseged H."/>
            <person name="Loveland J.E."/>
            <person name="Lovell J.D."/>
            <person name="Lozado R."/>
            <person name="Lu J."/>
            <person name="Lyne R."/>
            <person name="Ma J."/>
            <person name="Maheshwari M."/>
            <person name="Matthews L.H."/>
            <person name="McDowall J."/>
            <person name="McLaren S."/>
            <person name="McMurray A."/>
            <person name="Meidl P."/>
            <person name="Meitinger T."/>
            <person name="Milne S."/>
            <person name="Miner G."/>
            <person name="Mistry S.L."/>
            <person name="Morgan M."/>
            <person name="Morris S."/>
            <person name="Mueller I."/>
            <person name="Mullikin J.C."/>
            <person name="Nguyen N."/>
            <person name="Nordsiek G."/>
            <person name="Nyakatura G."/>
            <person name="O'dell C.N."/>
            <person name="Okwuonu G."/>
            <person name="Palmer S."/>
            <person name="Pandian R."/>
            <person name="Parker D."/>
            <person name="Parrish J."/>
            <person name="Pasternak S."/>
            <person name="Patel D."/>
            <person name="Pearce A.V."/>
            <person name="Pearson D.M."/>
            <person name="Pelan S.E."/>
            <person name="Perez L."/>
            <person name="Porter K.M."/>
            <person name="Ramsey Y."/>
            <person name="Reichwald K."/>
            <person name="Rhodes S."/>
            <person name="Ridler K.A."/>
            <person name="Schlessinger D."/>
            <person name="Schueler M.G."/>
            <person name="Sehra H.K."/>
            <person name="Shaw-Smith C."/>
            <person name="Shen H."/>
            <person name="Sheridan E.M."/>
            <person name="Shownkeen R."/>
            <person name="Skuce C.D."/>
            <person name="Smith M.L."/>
            <person name="Sotheran E.C."/>
            <person name="Steingruber H.E."/>
            <person name="Steward C.A."/>
            <person name="Storey R."/>
            <person name="Swann R.M."/>
            <person name="Swarbreck D."/>
            <person name="Tabor P.E."/>
            <person name="Taudien S."/>
            <person name="Taylor T."/>
            <person name="Teague B."/>
            <person name="Thomas K."/>
            <person name="Thorpe A."/>
            <person name="Timms K."/>
            <person name="Tracey A."/>
            <person name="Trevanion S."/>
            <person name="Tromans A.C."/>
            <person name="d'Urso M."/>
            <person name="Verduzco D."/>
            <person name="Villasana D."/>
            <person name="Waldron L."/>
            <person name="Wall M."/>
            <person name="Wang Q."/>
            <person name="Warren J."/>
            <person name="Warry G.L."/>
            <person name="Wei X."/>
            <person name="West A."/>
            <person name="Whitehead S.L."/>
            <person name="Whiteley M.N."/>
            <person name="Wilkinson J.E."/>
            <person name="Willey D.L."/>
            <person name="Williams G."/>
            <person name="Williams L."/>
            <person name="Williamson A."/>
            <person name="Williamson H."/>
            <person name="Wilming L."/>
            <person name="Woodmansey R.L."/>
            <person name="Wray P.W."/>
            <person name="Yen J."/>
            <person name="Zhang J."/>
            <person name="Zhou J."/>
            <person name="Zoghbi H."/>
            <person name="Zorilla S."/>
            <person name="Buck D."/>
            <person name="Reinhardt R."/>
            <person name="Poustka A."/>
            <person name="Rosenthal A."/>
            <person name="Lehrach H."/>
            <person name="Meindl A."/>
            <person name="Minx P.J."/>
            <person name="Hillier L.W."/>
            <person name="Willard H.F."/>
            <person name="Wilson R.K."/>
            <person name="Waterston R.H."/>
            <person name="Rice C.M."/>
            <person name="Vaudin M."/>
            <person name="Coulson A."/>
            <person name="Nelson D.L."/>
            <person name="Weinstock G."/>
            <person name="Sulston J.E."/>
            <person name="Durbin R.M."/>
            <person name="Hubbard T."/>
            <person name="Gibbs R.A."/>
            <person name="Beck S."/>
            <person name="Rogers J."/>
            <person name="Bentley D.R."/>
        </authorList>
    </citation>
    <scope>NUCLEOTIDE SEQUENCE [LARGE SCALE GENOMIC DNA]</scope>
</reference>
<reference key="6">
    <citation type="submission" date="2005-09" db="EMBL/GenBank/DDBJ databases">
        <authorList>
            <person name="Mural R.J."/>
            <person name="Istrail S."/>
            <person name="Sutton G.G."/>
            <person name="Florea L."/>
            <person name="Halpern A.L."/>
            <person name="Mobarry C.M."/>
            <person name="Lippert R."/>
            <person name="Walenz B."/>
            <person name="Shatkay H."/>
            <person name="Dew I."/>
            <person name="Miller J.R."/>
            <person name="Flanigan M.J."/>
            <person name="Edwards N.J."/>
            <person name="Bolanos R."/>
            <person name="Fasulo D."/>
            <person name="Halldorsson B.V."/>
            <person name="Hannenhalli S."/>
            <person name="Turner R."/>
            <person name="Yooseph S."/>
            <person name="Lu F."/>
            <person name="Nusskern D.R."/>
            <person name="Shue B.C."/>
            <person name="Zheng X.H."/>
            <person name="Zhong F."/>
            <person name="Delcher A.L."/>
            <person name="Huson D.H."/>
            <person name="Kravitz S.A."/>
            <person name="Mouchard L."/>
            <person name="Reinert K."/>
            <person name="Remington K.A."/>
            <person name="Clark A.G."/>
            <person name="Waterman M.S."/>
            <person name="Eichler E.E."/>
            <person name="Adams M.D."/>
            <person name="Hunkapiller M.W."/>
            <person name="Myers E.W."/>
            <person name="Venter J.C."/>
        </authorList>
    </citation>
    <scope>NUCLEOTIDE SEQUENCE [LARGE SCALE GENOMIC DNA]</scope>
</reference>
<reference key="7">
    <citation type="journal article" date="2004" name="Genome Res.">
        <title>The status, quality, and expansion of the NIH full-length cDNA project: the Mammalian Gene Collection (MGC).</title>
        <authorList>
            <consortium name="The MGC Project Team"/>
        </authorList>
    </citation>
    <scope>NUCLEOTIDE SEQUENCE [LARGE SCALE MRNA] (ISOFORMS 3 AND 4)</scope>
    <source>
        <tissue>Placenta</tissue>
    </source>
</reference>
<reference key="8">
    <citation type="journal article" date="1997" name="Immunity">
        <title>MyD88: an adapter that recruits IRAK to the IL-1 receptor complex.</title>
        <authorList>
            <person name="Wesche H."/>
            <person name="Henzel W.J."/>
            <person name="Shillinglaw W."/>
            <person name="Li S."/>
            <person name="Cao Z."/>
        </authorList>
    </citation>
    <scope>INTERACTION WITH MYD88</scope>
</reference>
<reference key="9">
    <citation type="journal article" date="2000" name="Nat. Cell Biol.">
        <title>Tollip, a new component of the IL-1R1 pathway, links IRAK to the IL-1 receptor.</title>
        <authorList>
            <person name="Burns K."/>
            <person name="Clatworthy J."/>
            <person name="Martin L."/>
            <person name="Martinon F."/>
            <person name="Plumpton C."/>
            <person name="Maschera B."/>
            <person name="Lewis A."/>
            <person name="Ray K."/>
            <person name="Tschopp J."/>
            <person name="Volpe F."/>
        </authorList>
    </citation>
    <scope>INTERACTION WITH TOLLIP</scope>
</reference>
<reference key="10">
    <citation type="journal article" date="2002" name="Proc. Natl. Acad. Sci. U.S.A.">
        <title>IRAK4: a novel member of the IRAK family with the properties of an IRAK-kinase.</title>
        <authorList>
            <person name="Li S."/>
            <person name="Strelow A."/>
            <person name="Fontana E.J."/>
            <person name="Wesche H."/>
        </authorList>
    </citation>
    <scope>INTERACTION WITH IRAK4</scope>
</reference>
<reference key="11">
    <citation type="journal article" date="2003" name="J. Biol. Chem.">
        <title>Pellino 1 is required for interleukin-1 (IL-1)-mediated signaling through its interaction with the IL-1 receptor-associated kinase 4 (IRAK4)-IRAK-tumor necrosis factor receptor-associated factor 6 (TRAF6) complex.</title>
        <authorList>
            <person name="Jiang Z."/>
            <person name="Johnson H.J."/>
            <person name="Nie H."/>
            <person name="Qin J."/>
            <person name="Bird T.A."/>
            <person name="Li X."/>
        </authorList>
    </citation>
    <scope>INTERACTION WITH PELI1 AND TRAF6</scope>
</reference>
<reference key="12">
    <citation type="journal article" date="2003" name="FEBS Lett.">
        <title>Characterization of Pellino2, a substrate of IRAK1 and IRAK4.</title>
        <authorList>
            <person name="Strelow A."/>
            <person name="Kollewe C."/>
            <person name="Wesche H."/>
        </authorList>
    </citation>
    <scope>FUNCTION IN PHOSPHORYLATION OF PELI2</scope>
</reference>
<reference key="13">
    <citation type="journal article" date="2003" name="J. Exp. Med.">
        <title>Inhibition of interleukin 1 receptor/Toll-like receptor signaling through the alternatively spliced, short form of MyD88 is due to its failure to recruit IRAK-4.</title>
        <authorList>
            <person name="Burns K."/>
            <person name="Janssens S."/>
            <person name="Brissoni B."/>
            <person name="Olivos N."/>
            <person name="Beyaert R."/>
            <person name="Tschopp J."/>
        </authorList>
    </citation>
    <scope>PHOSPHORYLATION BY IRAK4</scope>
</reference>
<reference key="14">
    <citation type="journal article" date="2003" name="J. Immunol.">
        <title>Pellino3, a novel member of the Pellino protein family, promotes activation of c-Jun and Elk-1 and may act as a scaffolding protein.</title>
        <authorList>
            <person name="Jensen L.E."/>
            <person name="Whitehead A.S."/>
        </authorList>
    </citation>
    <scope>INTERACTION WITH PELI3</scope>
</reference>
<reference key="15">
    <citation type="journal article" date="2004" name="J. Biol. Chem.">
        <title>Regulation of interleukin receptor-associated kinase (IRAK) phosphorylation and signaling by iota protein kinase C.</title>
        <authorList>
            <person name="Mamidipudi V."/>
            <person name="Lin C."/>
            <person name="Seibenhener M.L."/>
            <person name="Wooten M.W."/>
        </authorList>
    </citation>
    <scope>FUNCTION</scope>
    <scope>PHOSPHORYLATION AT THR-66</scope>
</reference>
<reference key="16">
    <citation type="journal article" date="2004" name="J. Biol. Chem.">
        <title>Sequential autophosphorylation steps in the interleukin-1 receptor-associated kinase-1 regulate its availability as an adapter in interleukin-1 signaling.</title>
        <authorList>
            <person name="Kollewe C."/>
            <person name="Mackensen A.C."/>
            <person name="Neumann D."/>
            <person name="Knop J."/>
            <person name="Cao P."/>
            <person name="Li S."/>
            <person name="Wesche H."/>
            <person name="Martin M.U."/>
        </authorList>
    </citation>
    <scope>PHOSPHORYLATION AT THR-209 AND THR-387</scope>
    <scope>DOMAIN</scope>
    <scope>MUTAGENESIS OF THR-209 AND THR-387</scope>
</reference>
<reference key="17">
    <citation type="journal article" date="2004" name="J. Biol. Chem.">
        <title>IRAK4 kinase activity is redundant for interleukin-1 (IL-1) receptor-associated kinase phosphorylation and IL-1 responsiveness.</title>
        <authorList>
            <person name="Qin J."/>
            <person name="Jiang Z."/>
            <person name="Qian Y."/>
            <person name="Casanova J.-L."/>
            <person name="Li X."/>
        </authorList>
    </citation>
    <scope>FUNCTION</scope>
    <scope>MUTAGENESIS OF LYS-239</scope>
</reference>
<reference key="18">
    <citation type="journal article" date="2004" name="J. Biol. Chem.">
        <title>IRAK1 serves as a novel regulator essential for lipopolysaccharide-induced interleukin-10 gene expression.</title>
        <authorList>
            <person name="Huang Y."/>
            <person name="Li T."/>
            <person name="Sane D.C."/>
            <person name="Li L."/>
        </authorList>
    </citation>
    <scope>FUNCTION IN PHOSPHORYLATION OF STAT3</scope>
</reference>
<reference key="19">
    <citation type="journal article" date="2005" name="Immunity">
        <title>IL-33, an interleukin-1-like cytokine that signals via the IL-1 receptor-related protein ST 2 and induces T helper type 2-associated cytokines.</title>
        <authorList>
            <person name="Schmitz J."/>
            <person name="Owyang A."/>
            <person name="Oldham E."/>
            <person name="Song Y."/>
            <person name="Murphy E."/>
            <person name="McClanahan T.K."/>
            <person name="Zurawski G."/>
            <person name="Moshrefi M."/>
            <person name="Qin J."/>
            <person name="Li X."/>
            <person name="Gorman D.M."/>
            <person name="Bazan J.F."/>
            <person name="Kastelein R.A."/>
        </authorList>
    </citation>
    <scope>INTERACTION WITH IL1RL1</scope>
</reference>
<reference key="20">
    <citation type="journal article" date="2005" name="J. Exp. Med.">
        <title>Interleukin-1 receptor-associated kinase-1 plays an essential role for Toll-like receptor (TLR)7- and TLR9-mediated interferon-{alpha} induction.</title>
        <authorList>
            <person name="Uematsu S."/>
            <person name="Sato S."/>
            <person name="Yamamoto M."/>
            <person name="Hirotani T."/>
            <person name="Kato H."/>
            <person name="Takeshita F."/>
            <person name="Matsuda M."/>
            <person name="Coban C."/>
            <person name="Ishii K.J."/>
            <person name="Kawai T."/>
            <person name="Takeuchi O."/>
            <person name="Akira S."/>
        </authorList>
    </citation>
    <scope>FUNCTION IN PHOSPHORYLATION OF IRF7</scope>
</reference>
<reference key="21">
    <citation type="journal article" date="2006" name="Nat. Immunol.">
        <title>Smad6 negatively regulates interleukin 1-receptor-Toll-like receptor signaling through direct interaction with the adapter Pellino-1.</title>
        <authorList>
            <person name="Choi K.C."/>
            <person name="Lee Y.S."/>
            <person name="Lim S."/>
            <person name="Choi H.K."/>
            <person name="Lee C.H."/>
            <person name="Lee E.K."/>
            <person name="Hong S."/>
            <person name="Kim I.H."/>
            <person name="Kim S.J."/>
            <person name="Park S.H."/>
        </authorList>
    </citation>
    <scope>IDENTIFICATION IN COMPLEX WITH IRAK4; MYD88; PELI1 AND TRAF6</scope>
</reference>
<reference key="22">
    <citation type="journal article" date="2007" name="Mol. Immunol.">
        <title>Differential regulation of interleukin-1 receptor associated kinase 1 (IRAK1) splice variants.</title>
        <authorList>
            <person name="Su J."/>
            <person name="Richter K."/>
            <person name="Zhang C."/>
            <person name="Gu Q."/>
            <person name="Li L."/>
        </authorList>
    </citation>
    <scope>SUMOYLATION</scope>
    <scope>SUBCELLULAR LOCATION</scope>
</reference>
<reference key="23">
    <citation type="journal article" date="2008" name="Biochem. J.">
        <title>The IRAK-catalysed activation of the E3 ligase function of Pellino isoforms induces the Lys63-linked polyubiquitination of IRAK1.</title>
        <authorList>
            <person name="Ordureau A."/>
            <person name="Smith H."/>
            <person name="Windheim M."/>
            <person name="Peggie M."/>
            <person name="Carrick E."/>
            <person name="Morrice N."/>
            <person name="Cohen P."/>
        </authorList>
    </citation>
    <scope>FUNCTION IN PHOSPHORYLATION OF PELI1</scope>
</reference>
<reference key="24">
    <citation type="journal article" date="2008" name="Mol. Cell">
        <title>Kinase-selective enrichment enables quantitative phosphoproteomics of the kinome across the cell cycle.</title>
        <authorList>
            <person name="Daub H."/>
            <person name="Olsen J.V."/>
            <person name="Bairlein M."/>
            <person name="Gnad F."/>
            <person name="Oppermann F.S."/>
            <person name="Korner R."/>
            <person name="Greff Z."/>
            <person name="Keri G."/>
            <person name="Stemmann O."/>
            <person name="Mann M."/>
        </authorList>
    </citation>
    <scope>PHOSPHORYLATION [LARGE SCALE ANALYSIS] AT SER-131</scope>
    <scope>IDENTIFICATION BY MASS SPECTROMETRY [LARGE SCALE ANALYSIS]</scope>
    <source>
        <tissue>Cervix carcinoma</tissue>
    </source>
</reference>
<reference key="25">
    <citation type="journal article" date="2008" name="Mol. Cell. Biol.">
        <title>Lys63-linked polyubiquitination of IRAK-1 is required for interleukin-1 receptor- and toll-like receptor-mediated NF-kappaB activation.</title>
        <authorList>
            <person name="Conze D.B."/>
            <person name="Wu C.J."/>
            <person name="Thomas J.A."/>
            <person name="Landstrom A."/>
            <person name="Ashwell J.D."/>
        </authorList>
    </citation>
    <scope>UBIQUITINATION AT LYS-134 AND LYS-180 BY TRAF6</scope>
    <scope>INTERACTION WITH IKBKG/NEMO</scope>
</reference>
<reference key="26">
    <citation type="journal article" date="2008" name="Proc. Natl. Acad. Sci. U.S.A.">
        <title>A quantitative atlas of mitotic phosphorylation.</title>
        <authorList>
            <person name="Dephoure N."/>
            <person name="Zhou C."/>
            <person name="Villen J."/>
            <person name="Beausoleil S.A."/>
            <person name="Bakalarski C.E."/>
            <person name="Elledge S.J."/>
            <person name="Gygi S.P."/>
        </authorList>
    </citation>
    <scope>IDENTIFICATION BY MASS SPECTROMETRY [LARGE SCALE ANALYSIS]</scope>
    <source>
        <tissue>Cervix carcinoma</tissue>
    </source>
</reference>
<reference key="27">
    <citation type="journal article" date="2009" name="Nature">
        <title>Direct activation of protein kinases by unanchored polyubiquitin chains.</title>
        <authorList>
            <person name="Xia Z.-P."/>
            <person name="Sun L."/>
            <person name="Chen X."/>
            <person name="Pineda G."/>
            <person name="Jiang X."/>
            <person name="Adhikari A."/>
            <person name="Zeng W."/>
            <person name="Chen Z.J."/>
        </authorList>
    </citation>
    <scope>UBIQUITINATION</scope>
</reference>
<reference key="28">
    <citation type="journal article" date="2010" name="J. Biol. Chem.">
        <title>IRAK1 and IRAK4 promote phosphorylation, ubiquitination, and degradation of MyD88 adaptor-like (Mal).</title>
        <authorList>
            <person name="Dunne A."/>
            <person name="Carpenter S."/>
            <person name="Brikos C."/>
            <person name="Gray P."/>
            <person name="Strelow A."/>
            <person name="Wesche H."/>
            <person name="Morrice N."/>
            <person name="O'Neill L.A."/>
        </authorList>
    </citation>
    <scope>FUNCTION IN PHOSPHORYLATION OF TIRAP</scope>
</reference>
<reference key="29">
    <citation type="journal article" date="2008" name="Cell. Signal.">
        <title>IRAK1: a critical signaling mediator of innate immunity.</title>
        <authorList>
            <person name="Gottipati S."/>
            <person name="Rao N.L."/>
            <person name="Fung-Leung W.P."/>
        </authorList>
    </citation>
    <scope>REVIEW ON FUNCTION</scope>
</reference>
<reference key="30">
    <citation type="journal article" date="2008" name="Mol. Immunol.">
        <title>The interleukin-1 receptor associated kinase 1 contributes to the regulation of NFAT.</title>
        <authorList>
            <person name="Wang D."/>
            <person name="Fasciano S."/>
            <person name="Li L."/>
        </authorList>
    </citation>
    <scope>INTERACTION WITH NFATC4</scope>
    <scope>MUTAGENESIS OF ASP-340</scope>
</reference>
<reference key="31">
    <citation type="journal article" date="2009" name="Trends Immunol.">
        <title>The Pellino family: IRAK E3 ligases with emerging roles in innate immune signalling.</title>
        <authorList>
            <person name="Moynagh P.N."/>
        </authorList>
    </citation>
    <scope>REVIEW ON FUNCTION</scope>
</reference>
<reference key="32">
    <citation type="journal article" date="2011" name="BMC Syst. Biol.">
        <title>Initial characterization of the human central proteome.</title>
        <authorList>
            <person name="Burkard T.R."/>
            <person name="Planyavsky M."/>
            <person name="Kaupe I."/>
            <person name="Breitwieser F.P."/>
            <person name="Buerckstuemmer T."/>
            <person name="Bennett K.L."/>
            <person name="Superti-Furga G."/>
            <person name="Colinge J."/>
        </authorList>
    </citation>
    <scope>IDENTIFICATION BY MASS SPECTROMETRY [LARGE SCALE ANALYSIS]</scope>
</reference>
<reference key="33">
    <citation type="journal article" date="2013" name="J. Proteome Res.">
        <title>Toward a comprehensive characterization of a human cancer cell phosphoproteome.</title>
        <authorList>
            <person name="Zhou H."/>
            <person name="Di Palma S."/>
            <person name="Preisinger C."/>
            <person name="Peng M."/>
            <person name="Polat A.N."/>
            <person name="Heck A.J."/>
            <person name="Mohammed S."/>
        </authorList>
    </citation>
    <scope>PHOSPHORYLATION [LARGE SCALE ANALYSIS] AT SER-371; SER-375 AND SER-556</scope>
    <scope>IDENTIFICATION BY MASS SPECTROMETRY [LARGE SCALE ANALYSIS]</scope>
    <source>
        <tissue>Cervix carcinoma</tissue>
        <tissue>Erythroleukemia</tissue>
    </source>
</reference>
<reference key="34">
    <citation type="journal article" date="2017" name="J. Clin. Invest.">
        <title>An inflammatory bowel disease-risk variant in INAVA decreases pattern recognition receptor-induced outcomes.</title>
        <authorList>
            <person name="Yan J."/>
            <person name="Hedl M."/>
            <person name="Abraham C."/>
        </authorList>
    </citation>
    <scope>INTERACTION WITH INAVA</scope>
</reference>
<reference key="35">
    <citation type="journal article" date="2017" name="J. Virol.">
        <title>Mumps virus SH protein inhibits NF-kappaB activation by interacting with tumor necrosis factor receptor 1, interleukin-1 receptor 1, and Toll-like receptor 3 complexes.</title>
        <authorList>
            <person name="Franz S."/>
            <person name="Rennert P."/>
            <person name="Woznik M."/>
            <person name="Gruetzke J."/>
            <person name="Luedde A."/>
            <person name="Arriero Pais E.M."/>
            <person name="Finsterbusch T."/>
            <person name="Geyer H."/>
            <person name="Mankertz A."/>
            <person name="Friedrich N."/>
        </authorList>
    </citation>
    <scope>INTERACTION WITH MUMPS VIRUS PROTEIN SH</scope>
</reference>
<reference key="36">
    <citation type="journal article" date="2018" name="Mol. Cell">
        <title>PELI1 selectively targets kinase-active RIP3 for ubiquitylation-dependent proteasomal degradation.</title>
        <authorList>
            <person name="Choi S.W."/>
            <person name="Park H.H."/>
            <person name="Kim S."/>
            <person name="Chung J.M."/>
            <person name="Noh H.J."/>
            <person name="Kim S.K."/>
            <person name="Song H.K."/>
            <person name="Lee C.W."/>
            <person name="Morgan M.J."/>
            <person name="Kang H.C."/>
            <person name="Kim Y.S."/>
        </authorList>
    </citation>
    <scope>INTERACTION WITH PELI1</scope>
</reference>
<reference key="37">
    <citation type="journal article" date="2021" name="Viruses">
        <title>The Alphaviral Capsid Protein Inhibits IRAK1-Dependent TLR Signaling.</title>
        <authorList>
            <person name="Landers V.D."/>
            <person name="Wilkey D.W."/>
            <person name="Merchant M.L."/>
            <person name="Mitchell T.C."/>
            <person name="Sokoloski K.J."/>
        </authorList>
    </citation>
    <scope>INTERACTION WITH ALPHAVIRUS CAPSID PROTEINS (MICROBIAL INFECTION)</scope>
</reference>
<reference key="38">
    <citation type="journal article" date="2007" name="Nature">
        <title>Patterns of somatic mutation in human cancer genomes.</title>
        <authorList>
            <person name="Greenman C."/>
            <person name="Stephens P."/>
            <person name="Smith R."/>
            <person name="Dalgliesh G.L."/>
            <person name="Hunter C."/>
            <person name="Bignell G."/>
            <person name="Davies H."/>
            <person name="Teague J."/>
            <person name="Butler A."/>
            <person name="Stevens C."/>
            <person name="Edkins S."/>
            <person name="O'Meara S."/>
            <person name="Vastrik I."/>
            <person name="Schmidt E.E."/>
            <person name="Avis T."/>
            <person name="Barthorpe S."/>
            <person name="Bhamra G."/>
            <person name="Buck G."/>
            <person name="Choudhury B."/>
            <person name="Clements J."/>
            <person name="Cole J."/>
            <person name="Dicks E."/>
            <person name="Forbes S."/>
            <person name="Gray K."/>
            <person name="Halliday K."/>
            <person name="Harrison R."/>
            <person name="Hills K."/>
            <person name="Hinton J."/>
            <person name="Jenkinson A."/>
            <person name="Jones D."/>
            <person name="Menzies A."/>
            <person name="Mironenko T."/>
            <person name="Perry J."/>
            <person name="Raine K."/>
            <person name="Richardson D."/>
            <person name="Shepherd R."/>
            <person name="Small A."/>
            <person name="Tofts C."/>
            <person name="Varian J."/>
            <person name="Webb T."/>
            <person name="West S."/>
            <person name="Widaa S."/>
            <person name="Yates A."/>
            <person name="Cahill D.P."/>
            <person name="Louis D.N."/>
            <person name="Goldstraw P."/>
            <person name="Nicholson A.G."/>
            <person name="Brasseur F."/>
            <person name="Looijenga L."/>
            <person name="Weber B.L."/>
            <person name="Chiew Y.-E."/>
            <person name="DeFazio A."/>
            <person name="Greaves M.F."/>
            <person name="Green A.R."/>
            <person name="Campbell P."/>
            <person name="Birney E."/>
            <person name="Easton D.F."/>
            <person name="Chenevix-Trench G."/>
            <person name="Tan M.-H."/>
            <person name="Khoo S.K."/>
            <person name="Teh B.T."/>
            <person name="Yuen S.T."/>
            <person name="Leung S.Y."/>
            <person name="Wooster R."/>
            <person name="Futreal P.A."/>
            <person name="Stratton M.R."/>
        </authorList>
    </citation>
    <scope>VARIANTS [LARGE SCALE ANALYSIS] MET-398; MET-412; HIS-421; LEU-532; SER-619; MET-625; TRP-638 AND GLY-690</scope>
</reference>
<accession>P51617</accession>
<accession>D3DWW3</accession>
<accession>D3DWW4</accession>
<accession>Q7Z5V4</accession>
<accession>Q96C06</accession>
<accession>Q96RL2</accession>
<organism>
    <name type="scientific">Homo sapiens</name>
    <name type="common">Human</name>
    <dbReference type="NCBI Taxonomy" id="9606"/>
    <lineage>
        <taxon>Eukaryota</taxon>
        <taxon>Metazoa</taxon>
        <taxon>Chordata</taxon>
        <taxon>Craniata</taxon>
        <taxon>Vertebrata</taxon>
        <taxon>Euteleostomi</taxon>
        <taxon>Mammalia</taxon>
        <taxon>Eutheria</taxon>
        <taxon>Euarchontoglires</taxon>
        <taxon>Primates</taxon>
        <taxon>Haplorrhini</taxon>
        <taxon>Catarrhini</taxon>
        <taxon>Hominidae</taxon>
        <taxon>Homo</taxon>
    </lineage>
</organism>
<feature type="chain" id="PRO_0000086030" description="Interleukin-1 receptor-associated kinase 1">
    <location>
        <begin position="1"/>
        <end position="712"/>
    </location>
</feature>
<feature type="domain" description="Death">
    <location>
        <begin position="27"/>
        <end position="106"/>
    </location>
</feature>
<feature type="domain" description="Protein kinase" evidence="3">
    <location>
        <begin position="212"/>
        <end position="521"/>
    </location>
</feature>
<feature type="region of interest" description="Disordered" evidence="5">
    <location>
        <begin position="105"/>
        <end position="187"/>
    </location>
</feature>
<feature type="region of interest" description="ProST region">
    <location>
        <begin position="110"/>
        <end position="211"/>
    </location>
</feature>
<feature type="region of interest" description="Disordered" evidence="5">
    <location>
        <begin position="532"/>
        <end position="591"/>
    </location>
</feature>
<feature type="region of interest" description="Disordered" evidence="5">
    <location>
        <begin position="613"/>
        <end position="660"/>
    </location>
</feature>
<feature type="region of interest" description="Disordered" evidence="5">
    <location>
        <begin position="690"/>
        <end position="712"/>
    </location>
</feature>
<feature type="compositionally biased region" description="Low complexity" evidence="5">
    <location>
        <begin position="115"/>
        <end position="133"/>
    </location>
</feature>
<feature type="compositionally biased region" description="Polar residues" evidence="5">
    <location>
        <begin position="137"/>
        <end position="154"/>
    </location>
</feature>
<feature type="compositionally biased region" description="Polar residues" evidence="5">
    <location>
        <begin position="543"/>
        <end position="553"/>
    </location>
</feature>
<feature type="compositionally biased region" description="Low complexity" evidence="5">
    <location>
        <begin position="562"/>
        <end position="575"/>
    </location>
</feature>
<feature type="compositionally biased region" description="Low complexity" evidence="5">
    <location>
        <begin position="643"/>
        <end position="658"/>
    </location>
</feature>
<feature type="active site" description="Proton acceptor" evidence="3 4">
    <location>
        <position position="340"/>
    </location>
</feature>
<feature type="binding site" evidence="3">
    <location>
        <begin position="218"/>
        <end position="226"/>
    </location>
    <ligand>
        <name>ATP</name>
        <dbReference type="ChEBI" id="CHEBI:30616"/>
    </ligand>
</feature>
<feature type="binding site">
    <location>
        <position position="239"/>
    </location>
    <ligand>
        <name>ATP</name>
        <dbReference type="ChEBI" id="CHEBI:30616"/>
    </ligand>
</feature>
<feature type="binding site" evidence="3">
    <location>
        <begin position="342"/>
        <end position="345"/>
    </location>
    <ligand>
        <name>ATP</name>
        <dbReference type="ChEBI" id="CHEBI:30616"/>
    </ligand>
</feature>
<feature type="binding site" evidence="3">
    <location>
        <position position="358"/>
    </location>
    <ligand>
        <name>ATP</name>
        <dbReference type="ChEBI" id="CHEBI:30616"/>
    </ligand>
</feature>
<feature type="modified residue" description="Phosphothreonine; by PKC/PRKCI" evidence="14">
    <location>
        <position position="66"/>
    </location>
</feature>
<feature type="modified residue" description="Phosphoserine" evidence="39">
    <location>
        <position position="131"/>
    </location>
</feature>
<feature type="modified residue" description="Phosphothreonine; by IRAK4" evidence="37">
    <location>
        <position position="209"/>
    </location>
</feature>
<feature type="modified residue" description="Phosphoserine" evidence="40">
    <location>
        <position position="371"/>
    </location>
</feature>
<feature type="modified residue" description="Phosphoserine" evidence="40">
    <location>
        <position position="375"/>
    </location>
</feature>
<feature type="modified residue" description="Phosphothreonine" evidence="13">
    <location>
        <position position="387"/>
    </location>
</feature>
<feature type="modified residue" description="Phosphoserine" evidence="40">
    <location>
        <position position="556"/>
    </location>
</feature>
<feature type="cross-link" description="Glycyl lysine isopeptide (Lys-Gly) (interchain with G-Cter in ubiquitin)" evidence="23">
    <location>
        <position position="134"/>
    </location>
</feature>
<feature type="cross-link" description="Glycyl lysine isopeptide (Lys-Gly) (interchain with G-Cter in ubiquitin)" evidence="23">
    <location>
        <position position="180"/>
    </location>
</feature>
<feature type="splice variant" id="VSP_011849" description="In isoform 3." evidence="34">
    <original>F</original>
    <variation>FGGWRRAAGGREARGLLAPTPDAPRPA</variation>
    <location>
        <position position="45"/>
    </location>
</feature>
<feature type="splice variant" id="VSP_041950" description="In isoform 4." evidence="34 35">
    <location>
        <begin position="435"/>
        <end position="513"/>
    </location>
</feature>
<feature type="splice variant" id="VSP_011850" description="In isoform 3." evidence="34">
    <location>
        <begin position="478"/>
        <end position="492"/>
    </location>
</feature>
<feature type="splice variant" id="VSP_011851" description="In isoform 2 and isoform 3." evidence="33 34">
    <location>
        <begin position="513"/>
        <end position="542"/>
    </location>
</feature>
<feature type="sequence variant" id="VAR_051629" description="In dbSNP:rs11465830.">
    <original>R</original>
    <variation>H</variation>
    <location>
        <position position="194"/>
    </location>
</feature>
<feature type="sequence variant" id="VAR_051630" description="In dbSNP:rs1059702." evidence="31">
    <original>F</original>
    <variation>S</variation>
    <location>
        <position position="196"/>
    </location>
</feature>
<feature type="sequence variant" id="VAR_051631" description="In dbSNP:rs10127175.">
    <original>C</original>
    <variation>S</variation>
    <location>
        <position position="203"/>
    </location>
</feature>
<feature type="sequence variant" id="VAR_040573" description="In dbSNP:rs56340948." evidence="21">
    <original>T</original>
    <variation>M</variation>
    <location>
        <position position="398"/>
    </location>
</feature>
<feature type="sequence variant" id="VAR_040574" description="In a glioblastoma multiforme sample; somatic mutation." evidence="21">
    <original>V</original>
    <variation>M</variation>
    <location>
        <position position="412"/>
    </location>
</feature>
<feature type="sequence variant" id="VAR_040575" description="In a breast pleomorphic lobular carcinoma sample; somatic mutation." evidence="21">
    <original>Q</original>
    <variation>H</variation>
    <location>
        <position position="421"/>
    </location>
</feature>
<feature type="sequence variant" id="VAR_040576" description="In dbSNP:rs1059703." evidence="21 31">
    <original>S</original>
    <variation>L</variation>
    <location>
        <position position="532"/>
    </location>
</feature>
<feature type="sequence variant" id="VAR_040577" description="In dbSNP:rs34112487." evidence="21">
    <original>G</original>
    <variation>S</variation>
    <location>
        <position position="619"/>
    </location>
</feature>
<feature type="sequence variant" id="VAR_040578" description="In dbSNP:rs35638718." evidence="21">
    <original>T</original>
    <variation>M</variation>
    <location>
        <position position="625"/>
    </location>
</feature>
<feature type="sequence variant" id="VAR_040579" description="In dbSNP:rs56082801." evidence="21">
    <original>R</original>
    <variation>W</variation>
    <location>
        <position position="638"/>
    </location>
</feature>
<feature type="sequence variant" id="VAR_040580" description="In a lung adenocarcinoma sample; somatic mutation." evidence="21">
    <original>S</original>
    <variation>G</variation>
    <location>
        <position position="690"/>
    </location>
</feature>
<feature type="mutagenesis site" description="Completely abolishes auto-phosphorylation in the kinase domain." evidence="13">
    <original>T</original>
    <variation>A</variation>
    <location>
        <position position="209"/>
    </location>
</feature>
<feature type="mutagenesis site" description="Loss of kinase activity." evidence="15">
    <original>K</original>
    <variation>S</variation>
    <location>
        <position position="239"/>
    </location>
</feature>
<feature type="mutagenesis site" description="Loss of kinase activity." evidence="24">
    <original>D</original>
    <variation>N</variation>
    <location>
        <position position="340"/>
    </location>
</feature>
<feature type="mutagenesis site" description="Loss of kinase activity." evidence="13">
    <original>T</original>
    <variation>A</variation>
    <location>
        <position position="387"/>
    </location>
</feature>
<feature type="strand" evidence="41">
    <location>
        <begin position="195"/>
        <end position="197"/>
    </location>
</feature>
<feature type="helix" evidence="41">
    <location>
        <begin position="202"/>
        <end position="209"/>
    </location>
</feature>
<feature type="turn" evidence="41">
    <location>
        <begin position="210"/>
        <end position="212"/>
    </location>
</feature>
<feature type="strand" evidence="41">
    <location>
        <begin position="217"/>
        <end position="220"/>
    </location>
</feature>
<feature type="strand" evidence="41">
    <location>
        <begin position="222"/>
        <end position="231"/>
    </location>
</feature>
<feature type="strand" evidence="41">
    <location>
        <begin position="234"/>
        <end position="241"/>
    </location>
</feature>
<feature type="helix" evidence="41">
    <location>
        <begin position="249"/>
        <end position="265"/>
    </location>
</feature>
<feature type="strand" evidence="41">
    <location>
        <begin position="274"/>
        <end position="280"/>
    </location>
</feature>
<feature type="strand" evidence="41">
    <location>
        <begin position="283"/>
        <end position="289"/>
    </location>
</feature>
<feature type="helix" evidence="41">
    <location>
        <begin position="296"/>
        <end position="301"/>
    </location>
</feature>
<feature type="strand" evidence="41">
    <location>
        <begin position="304"/>
        <end position="307"/>
    </location>
</feature>
<feature type="helix" evidence="41">
    <location>
        <begin position="312"/>
        <end position="331"/>
    </location>
</feature>
<feature type="strand" evidence="41">
    <location>
        <begin position="332"/>
        <end position="334"/>
    </location>
</feature>
<feature type="strand" evidence="41">
    <location>
        <begin position="345"/>
        <end position="348"/>
    </location>
</feature>
<feature type="strand" evidence="41">
    <location>
        <begin position="354"/>
        <end position="356"/>
    </location>
</feature>
<feature type="helix" evidence="41">
    <location>
        <begin position="359"/>
        <end position="361"/>
    </location>
</feature>
<feature type="helix" evidence="41">
    <location>
        <begin position="388"/>
        <end position="390"/>
    </location>
</feature>
<feature type="helix" evidence="41">
    <location>
        <begin position="393"/>
        <end position="397"/>
    </location>
</feature>
<feature type="helix" evidence="41">
    <location>
        <begin position="403"/>
        <end position="419"/>
    </location>
</feature>
<feature type="strand" evidence="41">
    <location>
        <begin position="423"/>
        <end position="427"/>
    </location>
</feature>
<feature type="strand" evidence="41">
    <location>
        <begin position="430"/>
        <end position="433"/>
    </location>
</feature>
<feature type="helix" evidence="41">
    <location>
        <begin position="434"/>
        <end position="436"/>
    </location>
</feature>
<feature type="helix" evidence="41">
    <location>
        <begin position="437"/>
        <end position="445"/>
    </location>
</feature>
<feature type="helix" evidence="41">
    <location>
        <begin position="464"/>
        <end position="466"/>
    </location>
</feature>
<feature type="helix" evidence="41">
    <location>
        <begin position="467"/>
        <end position="476"/>
    </location>
</feature>
<feature type="helix" evidence="41">
    <location>
        <begin position="487"/>
        <end position="500"/>
    </location>
</feature>
<feature type="helix" evidence="41">
    <location>
        <begin position="505"/>
        <end position="507"/>
    </location>
</feature>
<feature type="helix" evidence="41">
    <location>
        <begin position="511"/>
        <end position="521"/>
    </location>
</feature>
<feature type="helix" evidence="41">
    <location>
        <begin position="522"/>
        <end position="524"/>
    </location>
</feature>
<evidence type="ECO:0000250" key="1"/>
<evidence type="ECO:0000250" key="2">
    <source>
        <dbReference type="UniProtKB" id="Q62406"/>
    </source>
</evidence>
<evidence type="ECO:0000255" key="3">
    <source>
        <dbReference type="PROSITE-ProRule" id="PRU00159"/>
    </source>
</evidence>
<evidence type="ECO:0000255" key="4">
    <source>
        <dbReference type="PROSITE-ProRule" id="PRU10027"/>
    </source>
</evidence>
<evidence type="ECO:0000256" key="5">
    <source>
        <dbReference type="SAM" id="MobiDB-lite"/>
    </source>
</evidence>
<evidence type="ECO:0000269" key="6">
    <source>
    </source>
</evidence>
<evidence type="ECO:0000269" key="7">
    <source>
    </source>
</evidence>
<evidence type="ECO:0000269" key="8">
    <source>
    </source>
</evidence>
<evidence type="ECO:0000269" key="9">
    <source>
    </source>
</evidence>
<evidence type="ECO:0000269" key="10">
    <source>
    </source>
</evidence>
<evidence type="ECO:0000269" key="11">
    <source>
    </source>
</evidence>
<evidence type="ECO:0000269" key="12">
    <source>
    </source>
</evidence>
<evidence type="ECO:0000269" key="13">
    <source>
    </source>
</evidence>
<evidence type="ECO:0000269" key="14">
    <source>
    </source>
</evidence>
<evidence type="ECO:0000269" key="15">
    <source>
    </source>
</evidence>
<evidence type="ECO:0000269" key="16">
    <source>
    </source>
</evidence>
<evidence type="ECO:0000269" key="17">
    <source>
    </source>
</evidence>
<evidence type="ECO:0000269" key="18">
    <source>
    </source>
</evidence>
<evidence type="ECO:0000269" key="19">
    <source>
    </source>
</evidence>
<evidence type="ECO:0000269" key="20">
    <source>
    </source>
</evidence>
<evidence type="ECO:0000269" key="21">
    <source>
    </source>
</evidence>
<evidence type="ECO:0000269" key="22">
    <source>
    </source>
</evidence>
<evidence type="ECO:0000269" key="23">
    <source>
    </source>
</evidence>
<evidence type="ECO:0000269" key="24">
    <source>
    </source>
</evidence>
<evidence type="ECO:0000269" key="25">
    <source>
    </source>
</evidence>
<evidence type="ECO:0000269" key="26">
    <source>
    </source>
</evidence>
<evidence type="ECO:0000269" key="27">
    <source>
    </source>
</evidence>
<evidence type="ECO:0000269" key="28">
    <source>
    </source>
</evidence>
<evidence type="ECO:0000269" key="29">
    <source>
    </source>
</evidence>
<evidence type="ECO:0000269" key="30">
    <source>
    </source>
</evidence>
<evidence type="ECO:0000269" key="31">
    <source>
    </source>
</evidence>
<evidence type="ECO:0000269" key="32">
    <source>
    </source>
</evidence>
<evidence type="ECO:0000303" key="33">
    <source>
    </source>
</evidence>
<evidence type="ECO:0000303" key="34">
    <source>
    </source>
</evidence>
<evidence type="ECO:0000303" key="35">
    <source>
    </source>
</evidence>
<evidence type="ECO:0000305" key="36"/>
<evidence type="ECO:0000305" key="37">
    <source>
    </source>
</evidence>
<evidence type="ECO:0000312" key="38">
    <source>
        <dbReference type="HGNC" id="HGNC:6112"/>
    </source>
</evidence>
<evidence type="ECO:0007744" key="39">
    <source>
    </source>
</evidence>
<evidence type="ECO:0007744" key="40">
    <source>
    </source>
</evidence>
<evidence type="ECO:0007829" key="41">
    <source>
        <dbReference type="PDB" id="6BFN"/>
    </source>
</evidence>
<sequence length="712" mass="76537">MAGGPGPGEPAAPGAQHFLYEVPPWVMCRFYKVMDALEPADWCQFAALIVRDQTELRLCERSGQRTASVLWPWINRNARVADLVHILTHLQLLRARDIITAWHPPAPLPSPGTTAPRPSSIPAPAEAEAWSPRKLPSSASTFLSPAFPGSQTHSGPELGLVPSPASLWPPPPSPAPSSTKPGPESSVSLLQGARPFPFCWPLCEISRGTHNFSEELKIGEGGFGCVYRAVMRNTVYAVKRLKENADLEWTAVKQSFLTEVEQLSRFRHPNIVDFAGYCAQNGFYCLVYGFLPNGSLEDRLHCQTQACPPLSWPQRLDILLGTARAIQFLHQDSPSLIHGDIKSSNVLLDERLTPKLGDFGLARFSRFAGSSPSQSSMVARTQTVRGTLAYLPEEYIKTGRLAVDTDTFSFGVVVLETLAGQRAVKTHGARTKYLKDLVEEEAEEAGVALRSTQSTLQAGLAADAWAAPIAMQIYKKHLDPRPGPCPPELGLGLGQLACCCLHRRAKRRPPMTQVYERLEKLQAVVAGVPGHSEAASCIPPSPQENSYVSSTGRAHSGAAPWQPLAAPSGASAQAAEQLQRGPNQPVESDESLGGLSAALRSWHLTPSCPLDPAPLREAGCPQGDTAGESSWGSGPGSRPTAVEGLALGSSASSSSEPPQIIINPARQKMVQKLALYEDGALDSLQLLSSSSLPGLGLEQDRQGPEESDEFQS</sequence>
<proteinExistence type="evidence at protein level"/>
<keyword id="KW-0002">3D-structure</keyword>
<keyword id="KW-0025">Alternative splicing</keyword>
<keyword id="KW-0067">ATP-binding</keyword>
<keyword id="KW-0963">Cytoplasm</keyword>
<keyword id="KW-0903">Direct protein sequencing</keyword>
<keyword id="KW-0945">Host-virus interaction</keyword>
<keyword id="KW-0391">Immunity</keyword>
<keyword id="KW-0399">Innate immunity</keyword>
<keyword id="KW-1017">Isopeptide bond</keyword>
<keyword id="KW-0418">Kinase</keyword>
<keyword id="KW-0551">Lipid droplet</keyword>
<keyword id="KW-0460">Magnesium</keyword>
<keyword id="KW-0547">Nucleotide-binding</keyword>
<keyword id="KW-0539">Nucleus</keyword>
<keyword id="KW-0597">Phosphoprotein</keyword>
<keyword id="KW-1267">Proteomics identification</keyword>
<keyword id="KW-1185">Reference proteome</keyword>
<keyword id="KW-0723">Serine/threonine-protein kinase</keyword>
<keyword id="KW-0808">Transferase</keyword>
<keyword id="KW-0832">Ubl conjugation</keyword>
<protein>
    <recommendedName>
        <fullName evidence="35">Interleukin-1 receptor-associated kinase 1</fullName>
        <shortName evidence="35">IRAK-1</shortName>
        <ecNumber>2.7.11.1</ecNumber>
    </recommendedName>
</protein>